<reference key="1">
    <citation type="submission" date="2004-06" db="EMBL/GenBank/DDBJ databases">
        <authorList>
            <person name="Birren B.W."/>
            <person name="Stange-Thomann N."/>
            <person name="Hafez N."/>
            <person name="DeCaprio D."/>
            <person name="Fisher S."/>
            <person name="Butler J."/>
            <person name="Elkins T."/>
            <person name="Kodira C.D."/>
            <person name="Major J."/>
            <person name="Wang S."/>
            <person name="Nicol R."/>
            <person name="Nusbaum C."/>
        </authorList>
    </citation>
    <scope>NUCLEOTIDE SEQUENCE [LARGE SCALE GENOMIC DNA]</scope>
    <source>
        <strain>ATCC 33453 / NBRC 100688 / NCTC 11704 / L1</strain>
    </source>
</reference>
<feature type="chain" id="PRO_0000349694" description="tRNA-specific 2-thiouridylase MnmA">
    <location>
        <begin position="1"/>
        <end position="374"/>
    </location>
</feature>
<feature type="region of interest" description="Interaction with target base in tRNA" evidence="1">
    <location>
        <begin position="104"/>
        <end position="106"/>
    </location>
</feature>
<feature type="region of interest" description="Interaction with tRNA" evidence="1">
    <location>
        <begin position="158"/>
        <end position="160"/>
    </location>
</feature>
<feature type="region of interest" description="Interaction with tRNA" evidence="1">
    <location>
        <begin position="321"/>
        <end position="322"/>
    </location>
</feature>
<feature type="active site" description="Nucleophile" evidence="1">
    <location>
        <position position="109"/>
    </location>
</feature>
<feature type="active site" description="Cysteine persulfide intermediate" evidence="1">
    <location>
        <position position="208"/>
    </location>
</feature>
<feature type="binding site" evidence="1">
    <location>
        <begin position="8"/>
        <end position="15"/>
    </location>
    <ligand>
        <name>ATP</name>
        <dbReference type="ChEBI" id="CHEBI:30616"/>
    </ligand>
</feature>
<feature type="binding site" evidence="1">
    <location>
        <position position="34"/>
    </location>
    <ligand>
        <name>ATP</name>
        <dbReference type="ChEBI" id="CHEBI:30616"/>
    </ligand>
</feature>
<feature type="binding site" evidence="1">
    <location>
        <position position="134"/>
    </location>
    <ligand>
        <name>ATP</name>
        <dbReference type="ChEBI" id="CHEBI:30616"/>
    </ligand>
</feature>
<feature type="site" description="Interaction with tRNA" evidence="1">
    <location>
        <position position="135"/>
    </location>
</feature>
<feature type="site" description="Interaction with tRNA" evidence="1">
    <location>
        <position position="354"/>
    </location>
</feature>
<feature type="disulfide bond" description="Alternate" evidence="1">
    <location>
        <begin position="109"/>
        <end position="208"/>
    </location>
</feature>
<dbReference type="EC" id="2.8.1.13" evidence="1"/>
<dbReference type="EMBL" id="AE017263">
    <property type="protein sequence ID" value="AAT75771.1"/>
    <property type="molecule type" value="Genomic_DNA"/>
</dbReference>
<dbReference type="RefSeq" id="WP_011183311.1">
    <property type="nucleotide sequence ID" value="NC_006055.1"/>
</dbReference>
<dbReference type="RefSeq" id="YP_053655.1">
    <property type="nucleotide sequence ID" value="NC_006055.1"/>
</dbReference>
<dbReference type="SMR" id="Q6F152"/>
<dbReference type="STRING" id="265311.Mfl412"/>
<dbReference type="PaxDb" id="265311-Mfl412"/>
<dbReference type="EnsemblBacteria" id="AAT75771">
    <property type="protein sequence ID" value="AAT75771"/>
    <property type="gene ID" value="Mfl412"/>
</dbReference>
<dbReference type="GeneID" id="2898225"/>
<dbReference type="KEGG" id="mfl:Mfl412"/>
<dbReference type="PATRIC" id="fig|265311.5.peg.413"/>
<dbReference type="eggNOG" id="COG0482">
    <property type="taxonomic scope" value="Bacteria"/>
</dbReference>
<dbReference type="HOGENOM" id="CLU_035188_1_0_14"/>
<dbReference type="OrthoDB" id="9800696at2"/>
<dbReference type="Proteomes" id="UP000006647">
    <property type="component" value="Chromosome"/>
</dbReference>
<dbReference type="GO" id="GO:0005737">
    <property type="term" value="C:cytoplasm"/>
    <property type="evidence" value="ECO:0007669"/>
    <property type="project" value="UniProtKB-SubCell"/>
</dbReference>
<dbReference type="GO" id="GO:0005524">
    <property type="term" value="F:ATP binding"/>
    <property type="evidence" value="ECO:0007669"/>
    <property type="project" value="UniProtKB-KW"/>
</dbReference>
<dbReference type="GO" id="GO:0000049">
    <property type="term" value="F:tRNA binding"/>
    <property type="evidence" value="ECO:0007669"/>
    <property type="project" value="UniProtKB-KW"/>
</dbReference>
<dbReference type="GO" id="GO:0103016">
    <property type="term" value="F:tRNA-uridine 2-sulfurtransferase activity"/>
    <property type="evidence" value="ECO:0007669"/>
    <property type="project" value="UniProtKB-EC"/>
</dbReference>
<dbReference type="GO" id="GO:0002143">
    <property type="term" value="P:tRNA wobble position uridine thiolation"/>
    <property type="evidence" value="ECO:0007669"/>
    <property type="project" value="TreeGrafter"/>
</dbReference>
<dbReference type="CDD" id="cd01998">
    <property type="entry name" value="MnmA_TRMU-like"/>
    <property type="match status" value="1"/>
</dbReference>
<dbReference type="FunFam" id="2.30.30.280:FF:000001">
    <property type="entry name" value="tRNA-specific 2-thiouridylase MnmA"/>
    <property type="match status" value="1"/>
</dbReference>
<dbReference type="FunFam" id="2.40.30.10:FF:000023">
    <property type="entry name" value="tRNA-specific 2-thiouridylase MnmA"/>
    <property type="match status" value="1"/>
</dbReference>
<dbReference type="FunFam" id="3.40.50.620:FF:000004">
    <property type="entry name" value="tRNA-specific 2-thiouridylase MnmA"/>
    <property type="match status" value="1"/>
</dbReference>
<dbReference type="Gene3D" id="2.30.30.280">
    <property type="entry name" value="Adenine nucleotide alpha hydrolases-like domains"/>
    <property type="match status" value="1"/>
</dbReference>
<dbReference type="Gene3D" id="3.40.50.620">
    <property type="entry name" value="HUPs"/>
    <property type="match status" value="1"/>
</dbReference>
<dbReference type="Gene3D" id="2.40.30.10">
    <property type="entry name" value="Translation factors"/>
    <property type="match status" value="1"/>
</dbReference>
<dbReference type="HAMAP" id="MF_00144">
    <property type="entry name" value="tRNA_thiouridyl_MnmA"/>
    <property type="match status" value="1"/>
</dbReference>
<dbReference type="InterPro" id="IPR004506">
    <property type="entry name" value="MnmA-like"/>
</dbReference>
<dbReference type="InterPro" id="IPR046885">
    <property type="entry name" value="MnmA-like_C"/>
</dbReference>
<dbReference type="InterPro" id="IPR046884">
    <property type="entry name" value="MnmA-like_central"/>
</dbReference>
<dbReference type="InterPro" id="IPR023382">
    <property type="entry name" value="MnmA-like_central_sf"/>
</dbReference>
<dbReference type="InterPro" id="IPR014729">
    <property type="entry name" value="Rossmann-like_a/b/a_fold"/>
</dbReference>
<dbReference type="NCBIfam" id="NF001138">
    <property type="entry name" value="PRK00143.1"/>
    <property type="match status" value="1"/>
</dbReference>
<dbReference type="NCBIfam" id="TIGR00420">
    <property type="entry name" value="trmU"/>
    <property type="match status" value="1"/>
</dbReference>
<dbReference type="PANTHER" id="PTHR11933:SF5">
    <property type="entry name" value="MITOCHONDRIAL TRNA-SPECIFIC 2-THIOURIDYLASE 1"/>
    <property type="match status" value="1"/>
</dbReference>
<dbReference type="PANTHER" id="PTHR11933">
    <property type="entry name" value="TRNA 5-METHYLAMINOMETHYL-2-THIOURIDYLATE -METHYLTRANSFERASE"/>
    <property type="match status" value="1"/>
</dbReference>
<dbReference type="Pfam" id="PF03054">
    <property type="entry name" value="tRNA_Me_trans"/>
    <property type="match status" value="1"/>
</dbReference>
<dbReference type="Pfam" id="PF20258">
    <property type="entry name" value="tRNA_Me_trans_C"/>
    <property type="match status" value="1"/>
</dbReference>
<dbReference type="Pfam" id="PF20259">
    <property type="entry name" value="tRNA_Me_trans_M"/>
    <property type="match status" value="1"/>
</dbReference>
<dbReference type="SUPFAM" id="SSF52402">
    <property type="entry name" value="Adenine nucleotide alpha hydrolases-like"/>
    <property type="match status" value="1"/>
</dbReference>
<organism>
    <name type="scientific">Mesoplasma florum (strain ATCC 33453 / NBRC 100688 / NCTC 11704 / L1)</name>
    <name type="common">Acholeplasma florum</name>
    <dbReference type="NCBI Taxonomy" id="265311"/>
    <lineage>
        <taxon>Bacteria</taxon>
        <taxon>Bacillati</taxon>
        <taxon>Mycoplasmatota</taxon>
        <taxon>Mollicutes</taxon>
        <taxon>Entomoplasmatales</taxon>
        <taxon>Entomoplasmataceae</taxon>
        <taxon>Mesoplasma</taxon>
    </lineage>
</organism>
<keyword id="KW-0067">ATP-binding</keyword>
<keyword id="KW-0963">Cytoplasm</keyword>
<keyword id="KW-1015">Disulfide bond</keyword>
<keyword id="KW-0547">Nucleotide-binding</keyword>
<keyword id="KW-1185">Reference proteome</keyword>
<keyword id="KW-0694">RNA-binding</keyword>
<keyword id="KW-0808">Transferase</keyword>
<keyword id="KW-0819">tRNA processing</keyword>
<keyword id="KW-0820">tRNA-binding</keyword>
<comment type="function">
    <text evidence="1">Catalyzes the 2-thiolation of uridine at the wobble position (U34) of tRNA, leading to the formation of s(2)U34.</text>
</comment>
<comment type="catalytic activity">
    <reaction evidence="1">
        <text>S-sulfanyl-L-cysteinyl-[protein] + uridine(34) in tRNA + AH2 + ATP = 2-thiouridine(34) in tRNA + L-cysteinyl-[protein] + A + AMP + diphosphate + H(+)</text>
        <dbReference type="Rhea" id="RHEA:47032"/>
        <dbReference type="Rhea" id="RHEA-COMP:10131"/>
        <dbReference type="Rhea" id="RHEA-COMP:11726"/>
        <dbReference type="Rhea" id="RHEA-COMP:11727"/>
        <dbReference type="Rhea" id="RHEA-COMP:11728"/>
        <dbReference type="ChEBI" id="CHEBI:13193"/>
        <dbReference type="ChEBI" id="CHEBI:15378"/>
        <dbReference type="ChEBI" id="CHEBI:17499"/>
        <dbReference type="ChEBI" id="CHEBI:29950"/>
        <dbReference type="ChEBI" id="CHEBI:30616"/>
        <dbReference type="ChEBI" id="CHEBI:33019"/>
        <dbReference type="ChEBI" id="CHEBI:61963"/>
        <dbReference type="ChEBI" id="CHEBI:65315"/>
        <dbReference type="ChEBI" id="CHEBI:87170"/>
        <dbReference type="ChEBI" id="CHEBI:456215"/>
        <dbReference type="EC" id="2.8.1.13"/>
    </reaction>
</comment>
<comment type="subcellular location">
    <subcellularLocation>
        <location evidence="1">Cytoplasm</location>
    </subcellularLocation>
</comment>
<comment type="similarity">
    <text evidence="1">Belongs to the MnmA/TRMU family.</text>
</comment>
<protein>
    <recommendedName>
        <fullName evidence="1">tRNA-specific 2-thiouridylase MnmA</fullName>
        <ecNumber evidence="1">2.8.1.13</ecNumber>
    </recommendedName>
</protein>
<sequence>MKKKVIVGLSGGVDSSVAAYLLIQQGYEVEGLFMRNWDSSANNDILGNQEIDNDVCPQEQDYLDALEVANKLGIKLHRIDFVQEYWEYVFEYFIKEYKKGRTPNPDILCNKYIKFDKFLNHAINELKADYIAMGHYAGVRFNEKTKQYEMIRAVDTNKDQTYFLCQLTQNQLSKTLFPLQSLEKPEIRKIAAEQGLITADKKDSTGICFIGEREFTKFLQNYISNQPGDIVDIKTNEVLGKHIGAMYYTIGQRKGLNLGGMKEPYYVAAKDIDKKIIYVCPASDESYLLSNNAIVTEINWSLDLKQYIDNVEEFECTAKFRYRQPDVKVRLNKIKDNEYKVSYDAIVKAVTPGQEAVFYLNDICLGGGIIDIVE</sequence>
<proteinExistence type="inferred from homology"/>
<name>MNMA_MESFL</name>
<evidence type="ECO:0000255" key="1">
    <source>
        <dbReference type="HAMAP-Rule" id="MF_00144"/>
    </source>
</evidence>
<accession>Q6F152</accession>
<gene>
    <name evidence="1" type="primary">mnmA</name>
    <name type="ordered locus">Mfl412</name>
</gene>